<comment type="similarity">
    <text evidence="1">Belongs to the bacterial ribosomal protein bL35 family.</text>
</comment>
<evidence type="ECO:0000255" key="1">
    <source>
        <dbReference type="HAMAP-Rule" id="MF_00514"/>
    </source>
</evidence>
<evidence type="ECO:0000305" key="2"/>
<evidence type="ECO:0007829" key="3">
    <source>
        <dbReference type="PDB" id="7M4V"/>
    </source>
</evidence>
<proteinExistence type="evidence at protein level"/>
<feature type="chain" id="PRO_1000127291" description="Large ribosomal subunit protein bL35">
    <location>
        <begin position="1"/>
        <end position="64"/>
    </location>
</feature>
<feature type="helix" evidence="3">
    <location>
        <begin position="8"/>
        <end position="11"/>
    </location>
</feature>
<feature type="strand" evidence="3">
    <location>
        <begin position="18"/>
        <end position="24"/>
    </location>
</feature>
<feature type="strand" evidence="3">
    <location>
        <begin position="33"/>
        <end position="35"/>
    </location>
</feature>
<feature type="helix" evidence="3">
    <location>
        <begin position="37"/>
        <end position="42"/>
    </location>
</feature>
<feature type="strand" evidence="3">
    <location>
        <begin position="44"/>
        <end position="48"/>
    </location>
</feature>
<feature type="helix" evidence="3">
    <location>
        <begin position="51"/>
        <end position="60"/>
    </location>
</feature>
<reference key="1">
    <citation type="journal article" date="2008" name="J. Bacteriol.">
        <title>Comparative genome sequence analysis of multidrug-resistant Acinetobacter baumannii.</title>
        <authorList>
            <person name="Adams M.D."/>
            <person name="Goglin K."/>
            <person name="Molyneaux N."/>
            <person name="Hujer K.M."/>
            <person name="Lavender H."/>
            <person name="Jamison J.J."/>
            <person name="MacDonald I.J."/>
            <person name="Martin K.M."/>
            <person name="Russo T."/>
            <person name="Campagnari A.A."/>
            <person name="Hujer A.M."/>
            <person name="Bonomo R.A."/>
            <person name="Gill S.R."/>
        </authorList>
    </citation>
    <scope>NUCLEOTIDE SEQUENCE [LARGE SCALE GENOMIC DNA]</scope>
    <source>
        <strain>AB0057</strain>
    </source>
</reference>
<name>RL35_ACIB5</name>
<sequence length="64" mass="7402">MAKLKTRRGAAKRFKATANGFKRKQAFKRHILTKKSAKRIRQLRGCVMVHVSDVASVRRMCPYI</sequence>
<gene>
    <name evidence="1" type="primary">rpmI</name>
    <name type="ordered locus">AB57_0700</name>
</gene>
<protein>
    <recommendedName>
        <fullName evidence="1">Large ribosomal subunit protein bL35</fullName>
    </recommendedName>
    <alternativeName>
        <fullName evidence="2">50S ribosomal protein L35</fullName>
    </alternativeName>
</protein>
<accession>B7I693</accession>
<organism>
    <name type="scientific">Acinetobacter baumannii (strain AB0057)</name>
    <dbReference type="NCBI Taxonomy" id="480119"/>
    <lineage>
        <taxon>Bacteria</taxon>
        <taxon>Pseudomonadati</taxon>
        <taxon>Pseudomonadota</taxon>
        <taxon>Gammaproteobacteria</taxon>
        <taxon>Moraxellales</taxon>
        <taxon>Moraxellaceae</taxon>
        <taxon>Acinetobacter</taxon>
        <taxon>Acinetobacter calcoaceticus/baumannii complex</taxon>
    </lineage>
</organism>
<keyword id="KW-0002">3D-structure</keyword>
<keyword id="KW-0687">Ribonucleoprotein</keyword>
<keyword id="KW-0689">Ribosomal protein</keyword>
<dbReference type="EMBL" id="CP001182">
    <property type="protein sequence ID" value="ACJ40120.1"/>
    <property type="molecule type" value="Genomic_DNA"/>
</dbReference>
<dbReference type="RefSeq" id="WP_001096359.1">
    <property type="nucleotide sequence ID" value="NC_011586.2"/>
</dbReference>
<dbReference type="PDB" id="6V39">
    <property type="method" value="EM"/>
    <property type="resolution" value="3.04 A"/>
    <property type="chains" value="2=1-64"/>
</dbReference>
<dbReference type="PDB" id="6V3A">
    <property type="method" value="EM"/>
    <property type="resolution" value="2.82 A"/>
    <property type="chains" value="2=1-64"/>
</dbReference>
<dbReference type="PDB" id="6V3B">
    <property type="method" value="EM"/>
    <property type="resolution" value="2.91 A"/>
    <property type="chains" value="2=1-64"/>
</dbReference>
<dbReference type="PDB" id="6V3D">
    <property type="method" value="EM"/>
    <property type="resolution" value="2.95 A"/>
    <property type="chains" value="2=1-64"/>
</dbReference>
<dbReference type="PDB" id="7M4V">
    <property type="method" value="EM"/>
    <property type="resolution" value="2.54 A"/>
    <property type="chains" value="2=1-64"/>
</dbReference>
<dbReference type="PDB" id="7M4W">
    <property type="method" value="EM"/>
    <property type="resolution" value="2.55 A"/>
    <property type="chains" value="2=1-64"/>
</dbReference>
<dbReference type="PDB" id="7M4X">
    <property type="method" value="EM"/>
    <property type="resolution" value="2.66 A"/>
    <property type="chains" value="2=1-64"/>
</dbReference>
<dbReference type="PDB" id="7M4Y">
    <property type="method" value="EM"/>
    <property type="resolution" value="2.50 A"/>
    <property type="chains" value="2=1-64"/>
</dbReference>
<dbReference type="PDB" id="7M4Z">
    <property type="method" value="EM"/>
    <property type="resolution" value="2.92 A"/>
    <property type="chains" value="2=1-64"/>
</dbReference>
<dbReference type="PDB" id="7RYF">
    <property type="method" value="EM"/>
    <property type="resolution" value="2.65 A"/>
    <property type="chains" value="2=1-64"/>
</dbReference>
<dbReference type="PDB" id="7RYG">
    <property type="method" value="EM"/>
    <property type="resolution" value="2.38 A"/>
    <property type="chains" value="2=1-64"/>
</dbReference>
<dbReference type="PDB" id="7RYH">
    <property type="method" value="EM"/>
    <property type="resolution" value="2.43 A"/>
    <property type="chains" value="2=1-64"/>
</dbReference>
<dbReference type="PDB" id="7UVV">
    <property type="method" value="EM"/>
    <property type="resolution" value="2.50 A"/>
    <property type="chains" value="2=1-64"/>
</dbReference>
<dbReference type="PDB" id="7UVW">
    <property type="method" value="EM"/>
    <property type="resolution" value="2.37 A"/>
    <property type="chains" value="2=1-64"/>
</dbReference>
<dbReference type="PDB" id="7UVX">
    <property type="method" value="EM"/>
    <property type="resolution" value="2.35 A"/>
    <property type="chains" value="2=1-64"/>
</dbReference>
<dbReference type="PDB" id="7UVY">
    <property type="method" value="EM"/>
    <property type="resolution" value="2.39 A"/>
    <property type="chains" value="2=1-64"/>
</dbReference>
<dbReference type="PDB" id="7UVZ">
    <property type="method" value="EM"/>
    <property type="resolution" value="2.21 A"/>
    <property type="chains" value="2=1-64"/>
</dbReference>
<dbReference type="PDB" id="7UW1">
    <property type="method" value="EM"/>
    <property type="resolution" value="2.21 A"/>
    <property type="chains" value="2=1-64"/>
</dbReference>
<dbReference type="PDBsum" id="6V39"/>
<dbReference type="PDBsum" id="6V3A"/>
<dbReference type="PDBsum" id="6V3B"/>
<dbReference type="PDBsum" id="6V3D"/>
<dbReference type="PDBsum" id="7M4V"/>
<dbReference type="PDBsum" id="7M4W"/>
<dbReference type="PDBsum" id="7M4X"/>
<dbReference type="PDBsum" id="7M4Y"/>
<dbReference type="PDBsum" id="7M4Z"/>
<dbReference type="PDBsum" id="7RYF"/>
<dbReference type="PDBsum" id="7RYG"/>
<dbReference type="PDBsum" id="7RYH"/>
<dbReference type="PDBsum" id="7UVV"/>
<dbReference type="PDBsum" id="7UVW"/>
<dbReference type="PDBsum" id="7UVX"/>
<dbReference type="PDBsum" id="7UVY"/>
<dbReference type="PDBsum" id="7UVZ"/>
<dbReference type="PDBsum" id="7UW1"/>
<dbReference type="EMDB" id="EMD-21030"/>
<dbReference type="EMDB" id="EMD-21031"/>
<dbReference type="EMDB" id="EMD-21032"/>
<dbReference type="EMDB" id="EMD-21033"/>
<dbReference type="EMDB" id="EMD-23667"/>
<dbReference type="EMDB" id="EMD-23668"/>
<dbReference type="EMDB" id="EMD-23669"/>
<dbReference type="EMDB" id="EMD-23670"/>
<dbReference type="EMDB" id="EMD-23671"/>
<dbReference type="EMDB" id="EMD-24738"/>
<dbReference type="EMDB" id="EMD-24739"/>
<dbReference type="EMDB" id="EMD-24740"/>
<dbReference type="EMDB" id="EMD-26817"/>
<dbReference type="EMDB" id="EMD-26818"/>
<dbReference type="EMDB" id="EMD-26819"/>
<dbReference type="EMDB" id="EMD-26820"/>
<dbReference type="EMDB" id="EMD-26821"/>
<dbReference type="EMDB" id="EMD-26822"/>
<dbReference type="SMR" id="B7I693"/>
<dbReference type="IntAct" id="B7I693">
    <property type="interactions" value="2"/>
</dbReference>
<dbReference type="GeneID" id="92892575"/>
<dbReference type="KEGG" id="abn:AB57_0700"/>
<dbReference type="HOGENOM" id="CLU_169643_1_1_6"/>
<dbReference type="Proteomes" id="UP000007094">
    <property type="component" value="Chromosome"/>
</dbReference>
<dbReference type="GO" id="GO:0022625">
    <property type="term" value="C:cytosolic large ribosomal subunit"/>
    <property type="evidence" value="ECO:0007669"/>
    <property type="project" value="TreeGrafter"/>
</dbReference>
<dbReference type="GO" id="GO:0003735">
    <property type="term" value="F:structural constituent of ribosome"/>
    <property type="evidence" value="ECO:0007669"/>
    <property type="project" value="InterPro"/>
</dbReference>
<dbReference type="GO" id="GO:0006412">
    <property type="term" value="P:translation"/>
    <property type="evidence" value="ECO:0007669"/>
    <property type="project" value="UniProtKB-UniRule"/>
</dbReference>
<dbReference type="FunFam" id="4.10.410.60:FF:000001">
    <property type="entry name" value="50S ribosomal protein L35"/>
    <property type="match status" value="1"/>
</dbReference>
<dbReference type="Gene3D" id="4.10.410.60">
    <property type="match status" value="1"/>
</dbReference>
<dbReference type="HAMAP" id="MF_00514">
    <property type="entry name" value="Ribosomal_bL35"/>
    <property type="match status" value="1"/>
</dbReference>
<dbReference type="InterPro" id="IPR001706">
    <property type="entry name" value="Ribosomal_bL35"/>
</dbReference>
<dbReference type="InterPro" id="IPR021137">
    <property type="entry name" value="Ribosomal_bL35-like"/>
</dbReference>
<dbReference type="InterPro" id="IPR018265">
    <property type="entry name" value="Ribosomal_bL35_CS"/>
</dbReference>
<dbReference type="InterPro" id="IPR037229">
    <property type="entry name" value="Ribosomal_bL35_sf"/>
</dbReference>
<dbReference type="NCBIfam" id="TIGR00001">
    <property type="entry name" value="rpmI_bact"/>
    <property type="match status" value="1"/>
</dbReference>
<dbReference type="PANTHER" id="PTHR33343">
    <property type="entry name" value="54S RIBOSOMAL PROTEIN BL35M"/>
    <property type="match status" value="1"/>
</dbReference>
<dbReference type="PANTHER" id="PTHR33343:SF1">
    <property type="entry name" value="LARGE RIBOSOMAL SUBUNIT PROTEIN BL35M"/>
    <property type="match status" value="1"/>
</dbReference>
<dbReference type="Pfam" id="PF01632">
    <property type="entry name" value="Ribosomal_L35p"/>
    <property type="match status" value="1"/>
</dbReference>
<dbReference type="PRINTS" id="PR00064">
    <property type="entry name" value="RIBOSOMALL35"/>
</dbReference>
<dbReference type="SUPFAM" id="SSF143034">
    <property type="entry name" value="L35p-like"/>
    <property type="match status" value="1"/>
</dbReference>
<dbReference type="PROSITE" id="PS00936">
    <property type="entry name" value="RIBOSOMAL_L35"/>
    <property type="match status" value="1"/>
</dbReference>